<feature type="chain" id="PRO_0000114797" description="Ubiquitin">
    <location>
        <begin position="1"/>
        <end position="76"/>
    </location>
</feature>
<feature type="chain" id="PRO_0000138750" description="Large ribosomal subunit protein eL40">
    <location>
        <begin position="77"/>
        <end position="128"/>
    </location>
</feature>
<feature type="domain" description="Ubiquitin-like" evidence="5">
    <location>
        <begin position="1"/>
        <end position="76"/>
    </location>
</feature>
<feature type="site" description="Interacts with activating enzyme">
    <location>
        <position position="54"/>
    </location>
</feature>
<feature type="site" description="Essential for function">
    <location>
        <position position="68"/>
    </location>
</feature>
<feature type="site" description="Interacts with activating enzyme">
    <location>
        <position position="72"/>
    </location>
</feature>
<feature type="modified residue" description="Phosphoserine; by PINK1" evidence="4">
    <location>
        <position position="65"/>
    </location>
</feature>
<feature type="modified residue" description="ADP-ribosylglycine" evidence="4">
    <location>
        <position position="76"/>
    </location>
</feature>
<feature type="modified residue" description="N6,N6,N6-trimethyllysine" evidence="3">
    <location>
        <position position="98"/>
    </location>
</feature>
<feature type="cross-link" description="Glycyl lysine isopeptide (Lys-Gly) (interchain with G-Cter in ubiquitin)" evidence="4">
    <location>
        <position position="6"/>
    </location>
</feature>
<feature type="cross-link" description="Glycyl lysine isopeptide (Lys-Gly) (interchain with G-Cter in ubiquitin)" evidence="4">
    <location>
        <position position="11"/>
    </location>
</feature>
<feature type="cross-link" description="Glycyl lysine isopeptide (Lys-Gly) (interchain with G-Cter in ubiquitin)" evidence="4">
    <location>
        <position position="27"/>
    </location>
</feature>
<feature type="cross-link" description="Glycyl lysine isopeptide (Lys-Gly) (interchain with G-Cter in ubiquitin)" evidence="4">
    <location>
        <position position="29"/>
    </location>
</feature>
<feature type="cross-link" description="Glycyl lysine isopeptide (Lys-Gly) (interchain with G-Cter in ubiquitin)" evidence="4">
    <location>
        <position position="33"/>
    </location>
</feature>
<feature type="cross-link" description="Glycyl lysine isopeptide (Lys-Gly) (interchain with G-Cter in ubiquitin)" evidence="4">
    <location>
        <position position="48"/>
    </location>
</feature>
<feature type="cross-link" description="Glycyl lysine isopeptide (Lys-Gly) (interchain with G-Cter in ubiquitin)" evidence="4">
    <location>
        <position position="63"/>
    </location>
</feature>
<feature type="cross-link" description="Glycyl lysine isopeptide (Gly-Lys) (interchain with K-? in acceptor proteins)" evidence="5">
    <location>
        <position position="76"/>
    </location>
</feature>
<organism>
    <name type="scientific">Felis catus</name>
    <name type="common">Cat</name>
    <name type="synonym">Felis silvestris catus</name>
    <dbReference type="NCBI Taxonomy" id="9685"/>
    <lineage>
        <taxon>Eukaryota</taxon>
        <taxon>Metazoa</taxon>
        <taxon>Chordata</taxon>
        <taxon>Craniata</taxon>
        <taxon>Vertebrata</taxon>
        <taxon>Euteleostomi</taxon>
        <taxon>Mammalia</taxon>
        <taxon>Eutheria</taxon>
        <taxon>Laurasiatheria</taxon>
        <taxon>Carnivora</taxon>
        <taxon>Feliformia</taxon>
        <taxon>Felidae</taxon>
        <taxon>Felinae</taxon>
        <taxon>Felis</taxon>
    </lineage>
</organism>
<name>RL40_FELCA</name>
<dbReference type="EMBL" id="AB036698">
    <property type="protein sequence ID" value="BAA89414.1"/>
    <property type="molecule type" value="mRNA"/>
</dbReference>
<dbReference type="RefSeq" id="NP_001116826.1">
    <property type="nucleotide sequence ID" value="NM_001123354.1"/>
</dbReference>
<dbReference type="RefSeq" id="XP_006928658.1">
    <property type="nucleotide sequence ID" value="XM_006928596.3"/>
</dbReference>
<dbReference type="RefSeq" id="XP_006928659.1">
    <property type="nucleotide sequence ID" value="XM_006928597.4"/>
</dbReference>
<dbReference type="RefSeq" id="XP_011288766.1">
    <property type="nucleotide sequence ID" value="XM_011290464.3"/>
</dbReference>
<dbReference type="SMR" id="P63052"/>
<dbReference type="FunCoup" id="P63052">
    <property type="interactions" value="137"/>
</dbReference>
<dbReference type="STRING" id="9685.ENSFCAP00000009037"/>
<dbReference type="PaxDb" id="9685-ENSFCAP00000009037"/>
<dbReference type="Ensembl" id="ENSFCAT00000009747.5">
    <property type="protein sequence ID" value="ENSFCAP00000009037.2"/>
    <property type="gene ID" value="ENSFCAG00000009745.5"/>
</dbReference>
<dbReference type="GeneID" id="100144608"/>
<dbReference type="KEGG" id="fca:100144608"/>
<dbReference type="CTD" id="7311"/>
<dbReference type="VGNC" id="VGNC:97676">
    <property type="gene designation" value="UBA52"/>
</dbReference>
<dbReference type="eggNOG" id="KOG0003">
    <property type="taxonomic scope" value="Eukaryota"/>
</dbReference>
<dbReference type="GeneTree" id="ENSGT00940000153593"/>
<dbReference type="HOGENOM" id="CLU_010412_3_4_1"/>
<dbReference type="InParanoid" id="P63052"/>
<dbReference type="OMA" id="CGRCSQL"/>
<dbReference type="OrthoDB" id="428577at2759"/>
<dbReference type="TreeFam" id="TF352129"/>
<dbReference type="Proteomes" id="UP000011712">
    <property type="component" value="Chromosome A2"/>
</dbReference>
<dbReference type="Bgee" id="ENSFCAG00000009745">
    <property type="expression patterns" value="Expressed in testis and 11 other cell types or tissues"/>
</dbReference>
<dbReference type="GO" id="GO:0005737">
    <property type="term" value="C:cytoplasm"/>
    <property type="evidence" value="ECO:0000318"/>
    <property type="project" value="GO_Central"/>
</dbReference>
<dbReference type="GO" id="GO:0005634">
    <property type="term" value="C:nucleus"/>
    <property type="evidence" value="ECO:0000318"/>
    <property type="project" value="GO_Central"/>
</dbReference>
<dbReference type="GO" id="GO:1990904">
    <property type="term" value="C:ribonucleoprotein complex"/>
    <property type="evidence" value="ECO:0007669"/>
    <property type="project" value="UniProtKB-KW"/>
</dbReference>
<dbReference type="GO" id="GO:0005840">
    <property type="term" value="C:ribosome"/>
    <property type="evidence" value="ECO:0007669"/>
    <property type="project" value="UniProtKB-KW"/>
</dbReference>
<dbReference type="GO" id="GO:0031386">
    <property type="term" value="F:protein tag activity"/>
    <property type="evidence" value="ECO:0000318"/>
    <property type="project" value="GO_Central"/>
</dbReference>
<dbReference type="GO" id="GO:0003735">
    <property type="term" value="F:structural constituent of ribosome"/>
    <property type="evidence" value="ECO:0007669"/>
    <property type="project" value="InterPro"/>
</dbReference>
<dbReference type="GO" id="GO:0031625">
    <property type="term" value="F:ubiquitin protein ligase binding"/>
    <property type="evidence" value="ECO:0000318"/>
    <property type="project" value="GO_Central"/>
</dbReference>
<dbReference type="GO" id="GO:0019941">
    <property type="term" value="P:modification-dependent protein catabolic process"/>
    <property type="evidence" value="ECO:0000318"/>
    <property type="project" value="GO_Central"/>
</dbReference>
<dbReference type="GO" id="GO:0016567">
    <property type="term" value="P:protein ubiquitination"/>
    <property type="evidence" value="ECO:0000318"/>
    <property type="project" value="GO_Central"/>
</dbReference>
<dbReference type="GO" id="GO:0006412">
    <property type="term" value="P:translation"/>
    <property type="evidence" value="ECO:0007669"/>
    <property type="project" value="InterPro"/>
</dbReference>
<dbReference type="CDD" id="cd01803">
    <property type="entry name" value="Ubl_ubiquitin"/>
    <property type="match status" value="1"/>
</dbReference>
<dbReference type="FunFam" id="3.10.20.90:FF:000014">
    <property type="entry name" value="Ubiquitin-60S ribosomal L40 fusion"/>
    <property type="match status" value="1"/>
</dbReference>
<dbReference type="FunFam" id="4.10.1060.50:FF:000001">
    <property type="entry name" value="ubiquitin-60S ribosomal protein L40"/>
    <property type="match status" value="1"/>
</dbReference>
<dbReference type="Gene3D" id="4.10.1060.50">
    <property type="match status" value="1"/>
</dbReference>
<dbReference type="Gene3D" id="3.10.20.90">
    <property type="entry name" value="Phosphatidylinositol 3-kinase Catalytic Subunit, Chain A, domain 1"/>
    <property type="match status" value="1"/>
</dbReference>
<dbReference type="InterPro" id="IPR001975">
    <property type="entry name" value="Ribosomal_eL40_dom"/>
</dbReference>
<dbReference type="InterPro" id="IPR038587">
    <property type="entry name" value="Ribosomal_eL40_sf"/>
</dbReference>
<dbReference type="InterPro" id="IPR000626">
    <property type="entry name" value="Ubiquitin-like_dom"/>
</dbReference>
<dbReference type="InterPro" id="IPR029071">
    <property type="entry name" value="Ubiquitin-like_domsf"/>
</dbReference>
<dbReference type="InterPro" id="IPR019954">
    <property type="entry name" value="Ubiquitin_CS"/>
</dbReference>
<dbReference type="InterPro" id="IPR019956">
    <property type="entry name" value="Ubiquitin_dom"/>
</dbReference>
<dbReference type="InterPro" id="IPR050158">
    <property type="entry name" value="Ubiquitin_ubiquitin-like"/>
</dbReference>
<dbReference type="PANTHER" id="PTHR10666">
    <property type="entry name" value="UBIQUITIN"/>
    <property type="match status" value="1"/>
</dbReference>
<dbReference type="Pfam" id="PF01020">
    <property type="entry name" value="Ribosomal_L40e"/>
    <property type="match status" value="1"/>
</dbReference>
<dbReference type="Pfam" id="PF00240">
    <property type="entry name" value="ubiquitin"/>
    <property type="match status" value="1"/>
</dbReference>
<dbReference type="PRINTS" id="PR00348">
    <property type="entry name" value="UBIQUITIN"/>
</dbReference>
<dbReference type="SMART" id="SM01377">
    <property type="entry name" value="Ribosomal_L40e"/>
    <property type="match status" value="1"/>
</dbReference>
<dbReference type="SMART" id="SM00213">
    <property type="entry name" value="UBQ"/>
    <property type="match status" value="1"/>
</dbReference>
<dbReference type="SUPFAM" id="SSF54236">
    <property type="entry name" value="Ubiquitin-like"/>
    <property type="match status" value="1"/>
</dbReference>
<dbReference type="PROSITE" id="PS00299">
    <property type="entry name" value="UBIQUITIN_1"/>
    <property type="match status" value="1"/>
</dbReference>
<dbReference type="PROSITE" id="PS50053">
    <property type="entry name" value="UBIQUITIN_2"/>
    <property type="match status" value="1"/>
</dbReference>
<evidence type="ECO:0000250" key="1"/>
<evidence type="ECO:0000250" key="2">
    <source>
        <dbReference type="UniProtKB" id="P62984"/>
    </source>
</evidence>
<evidence type="ECO:0000250" key="3">
    <source>
        <dbReference type="UniProtKB" id="P62986"/>
    </source>
</evidence>
<evidence type="ECO:0000250" key="4">
    <source>
        <dbReference type="UniProtKB" id="P62987"/>
    </source>
</evidence>
<evidence type="ECO:0000255" key="5">
    <source>
        <dbReference type="PROSITE-ProRule" id="PRU00214"/>
    </source>
</evidence>
<evidence type="ECO:0000305" key="6"/>
<keyword id="KW-0013">ADP-ribosylation</keyword>
<keyword id="KW-0963">Cytoplasm</keyword>
<keyword id="KW-1017">Isopeptide bond</keyword>
<keyword id="KW-0488">Methylation</keyword>
<keyword id="KW-0539">Nucleus</keyword>
<keyword id="KW-0597">Phosphoprotein</keyword>
<keyword id="KW-1185">Reference proteome</keyword>
<keyword id="KW-0687">Ribonucleoprotein</keyword>
<keyword id="KW-0689">Ribosomal protein</keyword>
<keyword id="KW-0832">Ubl conjugation</keyword>
<protein>
    <recommendedName>
        <fullName evidence="6">Ubiquitin-ribosomal protein eL40 fusion protein</fullName>
    </recommendedName>
    <alternativeName>
        <fullName>Ubiquitin A-52 residue ribosomal protein fusion product 1</fullName>
    </alternativeName>
    <component>
        <recommendedName>
            <fullName>Ubiquitin</fullName>
        </recommendedName>
    </component>
    <component>
        <recommendedName>
            <fullName evidence="6">Large ribosomal subunit protein eL40</fullName>
        </recommendedName>
        <alternativeName>
            <fullName>60S ribosomal protein L40</fullName>
        </alternativeName>
        <alternativeName>
            <fullName>CEP52</fullName>
        </alternativeName>
    </component>
</protein>
<sequence>MQIFVKTLTGKTITLEVEPSDTIENVKAKIQDKEGIPPDQQRLIFAGKQLEDGRTLSDYNIQKESTLHLVLRLRGGIIEPSLRQLAQKYNCDKMICRKCYARLHPRAVNCRKKKCGHTNNLRPKKKVK</sequence>
<gene>
    <name type="primary">UBA52</name>
    <name type="synonym">UBCEP2</name>
</gene>
<reference key="1">
    <citation type="submission" date="2000-01" db="EMBL/GenBank/DDBJ databases">
        <authorList>
            <person name="Kano R."/>
        </authorList>
    </citation>
    <scope>NUCLEOTIDE SEQUENCE [MRNA]</scope>
</reference>
<accession>P63052</accession>
<accession>P63051</accession>
<accession>Q7JK33</accession>
<comment type="function">
    <molecule>Ubiquitin</molecule>
    <text evidence="4">Exists either covalently attached to another protein, or free (unanchored). When covalently bound, it is conjugated to target proteins via an isopeptide bond either as a monomer (monoubiquitin), a polymer linked via different Lys residues of the ubiquitin (polyubiquitin chains) or a linear polymer linked via the initiator Met of the ubiquitin (linear polyubiquitin chains). Polyubiquitin chains, when attached to a target protein, have different functions depending on the Lys residue of the ubiquitin that is linked: Lys-6-linked may be involved in DNA repair; Lys-11-linked is involved in ERAD (endoplasmic reticulum-associated degradation) and in cell-cycle regulation; Lys-29-linked is involved in proteotoxic stress response and cell cycle; Lys-33-linked is involved in kinase modification; Lys-48-linked is involved in protein degradation via the proteasome; Lys-63-linked is involved in endocytosis, DNA-damage responses as well as in signaling processes leading to activation of the transcription factor NF-kappa-B. Linear polymer chains formed via attachment by the initiator Met lead to cell signaling. Ubiquitin is usually conjugated to Lys residues of target proteins, however, in rare cases, conjugation to Cys or Ser residues has been observed. When polyubiquitin is free (unanchored-polyubiquitin), it also has distinct roles, such as in activation of protein kinases, and in signaling.</text>
</comment>
<comment type="function">
    <molecule>Large ribosomal subunit protein eL40</molecule>
    <text evidence="4">Component of the 60S subunit of the ribosome. Ribosomal protein L40 is essential for translation of a subset of cellular transcripts, and especially for cap-dependent translation of vesicular stomatitis virus mRNAs.</text>
</comment>
<comment type="subunit">
    <molecule>Large ribosomal subunit protein eL40</molecule>
    <text evidence="4">Part of the 60S ribosomal subunit. Interacts with UBQLN1 (via UBA domain).</text>
</comment>
<comment type="subcellular location">
    <molecule>Ubiquitin</molecule>
    <subcellularLocation>
        <location evidence="1">Cytoplasm</location>
    </subcellularLocation>
    <subcellularLocation>
        <location evidence="1">Nucleus</location>
    </subcellularLocation>
</comment>
<comment type="subcellular location">
    <molecule>Large ribosomal subunit protein eL40</molecule>
    <subcellularLocation>
        <location evidence="2">Cytoplasm</location>
    </subcellularLocation>
</comment>
<comment type="PTM">
    <molecule>Ubiquitin</molecule>
    <text evidence="4">Phosphorylated at Ser-65 by PINK1 during mitophagy. Phosphorylated ubiquitin specifically binds and activates parkin (PRKN), triggering mitophagy. Phosphorylation does not affect E1-mediated E2 charging of ubiquitin but affects discharging of E2 enzymes to form polyubiquitin chains. It also affects deubiquitination by deubiquitinase enzymes such as USP30.</text>
</comment>
<comment type="PTM">
    <molecule>Ubiquitin</molecule>
    <text evidence="4">Mono-ADP-ribosylated at the C-terminus by PARP9, a component of the PPAR9-DTX3L complex. ADP-ribosylation requires processing by E1 and E2 enzymes and prevents ubiquitin conjugation to substrates such as histones.</text>
</comment>
<comment type="PTM">
    <molecule>Large ribosomal subunit protein eL40</molecule>
    <text evidence="4">Tri tion of Lys-98 ('Lys-22' of the mature chain) by SMYD5 promotes translation elongation and protein synthesis.</text>
</comment>
<comment type="miscellaneous">
    <text>Ubiquitin is encoded by 4 different genes. Uba52 and Rps27a genes code for a single copy of ubiquitin fused to the ribosomal proteins eL40 and eS31, respectively. UBB and UBC genes code for a polyubiquitin precursor with exact head to tail repeats, the number of repeats differ between species and strains.</text>
</comment>
<comment type="similarity">
    <text evidence="6">In the N-terminal section; belongs to the ubiquitin family.</text>
</comment>
<comment type="similarity">
    <text evidence="6">In the C-terminal section; belongs to the eukaryotic ribosomal protein eL40 family.</text>
</comment>
<proteinExistence type="evidence at transcript level"/>